<protein>
    <recommendedName>
        <fullName evidence="10">Inactive CLIP domain-containing serine protease A8</fullName>
    </recommendedName>
    <component>
        <recommendedName>
            <fullName evidence="10">Inactive CLIP domain-containing serine protease A8 light chain</fullName>
        </recommendedName>
    </component>
    <component>
        <recommendedName>
            <fullName evidence="10">Inactive CLIP domain-containing serine protease A8 heavy chain</fullName>
        </recommendedName>
    </component>
</protein>
<evidence type="ECO:0000250" key="1">
    <source>
        <dbReference type="UniProtKB" id="Q9GRW0"/>
    </source>
</evidence>
<evidence type="ECO:0000255" key="2"/>
<evidence type="ECO:0000255" key="3">
    <source>
        <dbReference type="PROSITE-ProRule" id="PRU00274"/>
    </source>
</evidence>
<evidence type="ECO:0000255" key="4">
    <source>
        <dbReference type="PROSITE-ProRule" id="PRU00498"/>
    </source>
</evidence>
<evidence type="ECO:0000269" key="5">
    <source>
    </source>
</evidence>
<evidence type="ECO:0000269" key="6">
    <source>
    </source>
</evidence>
<evidence type="ECO:0000269" key="7">
    <source>
    </source>
</evidence>
<evidence type="ECO:0000269" key="8">
    <source>
    </source>
</evidence>
<evidence type="ECO:0000303" key="9">
    <source>
    </source>
</evidence>
<evidence type="ECO:0000305" key="10"/>
<evidence type="ECO:0000312" key="11">
    <source>
        <dbReference type="Proteomes" id="UP000007062"/>
    </source>
</evidence>
<gene>
    <name evidence="9" type="primary">CLIPA8</name>
    <name evidence="10" type="ORF">AGAP010731</name>
</gene>
<proteinExistence type="evidence at protein level"/>
<accession>A0A1S4H5S2</accession>
<accession>Q7QDZ6</accession>
<keyword id="KW-1015">Disulfide bond</keyword>
<keyword id="KW-0325">Glycoprotein</keyword>
<keyword id="KW-0391">Immunity</keyword>
<keyword id="KW-0399">Innate immunity</keyword>
<keyword id="KW-1185">Reference proteome</keyword>
<keyword id="KW-0964">Secreted</keyword>
<keyword id="KW-0721">Serine protease homolog</keyword>
<keyword id="KW-0732">Signal</keyword>
<comment type="function">
    <text evidence="5 6 7 8">Inactive serine protease which plays an essential role in the innate immune response against bacteria, fungi and protozoa infection by activating the melanization cascade (PubMed:16922859, PubMed:17537726, PubMed:23166497, PubMed:33045027). In the melanization cascade, acts downstream of TEP1 and SPCLIP1 to promote CLIPA28 and CLIPC9 proteolytic cleavage and CLIPC9 recruitment to microbial surfaces (PubMed:33045027). In the resistant strain L3-5, required for the melanization of killed parasite P.berghei ookinetes which results in their clearance (PubMed:16922859). In the susceptible strain G3, appears to be dispensable for ookinete elimination which occurs by lysis (PubMed:16922859, PubMed:33045027). Required for the melanization of Gram-positive and Gram-negative bacteria (PubMed:17537726). During the late stage of fungus B.bassiana-mediated infection, required for the initiation of hyphae melanization by promoting prophenoloxidase PPO activation (PubMed:23166497).</text>
</comment>
<comment type="subunit">
    <text evidence="6">Heterodimer of a light chain and a heavy chain; disulfide-linked.</text>
</comment>
<comment type="subcellular location">
    <subcellularLocation>
        <location evidence="6 8">Secreted</location>
    </subcellularLocation>
    <text evidence="6 8">Secreted into the hemolymph.</text>
</comment>
<comment type="induction">
    <text evidence="5 6">By Gram-positive and Gram-negative bacteria-mediated infection (PubMed:17537726). By parasite P.berghei infection (PubMed:16922859).</text>
</comment>
<comment type="domain">
    <text evidence="1">The clip domain consists of 35-55 residues which are 'knitted' together usually by 3 conserved disulfide bonds forming a clip-like compact structure.</text>
</comment>
<comment type="PTM">
    <text evidence="6">Secreted as a full-length protein (PubMed:17537726). Proteolytically cleaved into two chains which remain covalently linked (PubMed:17537726). Cleavage is induced by Gram-positive or Gram-negative bacteria infection (PubMed:17537726).</text>
</comment>
<comment type="disruption phenotype">
    <text evidence="5 6 7 8">In RNAi-mediated knockdown mosquitos infected with bacteria E.coli or S.aureus, bacteria melanization, prophenoloxidase (PPO) activation, and proteolytic cleavage of CLIPA28 and CLIPC9 are impaired; however, mosquito survival is not affected (PubMed:17537726, PubMed:33045027). Melanization of wound surfaces is normal (PubMed:17537726). Increased sensitivity to fungus B.bassiana (strain 80.2) infection characterized by reduced mosquito survival and increased levels of hyphal body colonies (PubMed:23166497). Impaired melanization of hyphae, but not of germinating conidia or germ tubes, caused by a failure to recruit prophenoloxidase PPO to hyphae (PubMed:23166497). Loss of phenoloxidase (PO) activity triggered during late but not early fungal infection (PubMed:23166497). RNAi-mediated knockdown in the resistant strain L3-5 infected with P.berghei, results in impaired ookinete melanization without increasing the number of live oocysts (PubMed:16922859). RNAi-mediated knockdown in the susceptible strain G3 infected with P.berghei has no effect on the response to parasite infection (PubMed:16922859, PubMed:33045027). Simultaneous RNAi-mediated knockdown of CLIPA8 and CTL4 in the susceptible strain G3 infected with P.berghei, abolishes ookinete melanization caused by RNAi-mediated knockdown of CTL4 (PubMed:16922859, PubMed:33045027). Simultaneous RNAi-mediated knockdown of SRPN2 and CLIPA8, does not rescue the formation of abdominal melanotic tumors caused by SRPN2 RNAi-mediated knockdown (PubMed:17537726).</text>
</comment>
<comment type="similarity">
    <text evidence="10">Belongs to the peptidase S1 family. CLIP subfamily.</text>
</comment>
<comment type="caution">
    <text evidence="10">Although it belongs to peptidase S1 family, lacks the conserved Ser residue within the catalytic triad (Asp-His-Ser) which is replaced by a Gly residue, probably resulting in a loss of proteolytic activity.</text>
</comment>
<comment type="sequence caution" evidence="10">
    <conflict type="erroneous gene model prediction">
        <sequence resource="EMBL-CDS" id="EAA07050"/>
    </conflict>
</comment>
<feature type="signal peptide" evidence="2">
    <location>
        <begin position="1"/>
        <end position="25"/>
    </location>
</feature>
<feature type="chain" id="PRO_5013000891" description="Inactive CLIP domain-containing serine protease A8" evidence="2">
    <location>
        <begin position="26"/>
        <end position="363"/>
    </location>
</feature>
<feature type="chain" id="PRO_0000455763" description="Inactive CLIP domain-containing serine protease A8 light chain" evidence="1">
    <location>
        <begin position="26"/>
        <end position="66"/>
    </location>
</feature>
<feature type="chain" id="PRO_0000455764" description="Inactive CLIP domain-containing serine protease A8 heavy chain" evidence="1">
    <location>
        <begin position="67"/>
        <end position="363"/>
    </location>
</feature>
<feature type="domain" description="Clip" evidence="1">
    <location>
        <begin position="33"/>
        <end position="82"/>
    </location>
</feature>
<feature type="domain" description="Peptidase S1" evidence="3">
    <location>
        <begin position="114"/>
        <end position="360"/>
    </location>
</feature>
<feature type="site" description="Cleavage" evidence="1">
    <location>
        <begin position="66"/>
        <end position="67"/>
    </location>
</feature>
<feature type="glycosylation site" description="N-linked (GlcNAc...) asparagine" evidence="4">
    <location>
        <position position="49"/>
    </location>
</feature>
<feature type="glycosylation site" description="N-linked (GlcNAc...) asparagine" evidence="4">
    <location>
        <position position="83"/>
    </location>
</feature>
<feature type="glycosylation site" description="N-linked (GlcNAc...) asparagine" evidence="4">
    <location>
        <position position="117"/>
    </location>
</feature>
<feature type="glycosylation site" description="N-linked (GlcNAc...) asparagine" evidence="4">
    <location>
        <position position="166"/>
    </location>
</feature>
<feature type="glycosylation site" description="N-linked (GlcNAc...) asparagine" evidence="4">
    <location>
        <position position="319"/>
    </location>
</feature>
<feature type="glycosylation site" description="N-linked (GlcNAc...) asparagine" evidence="4">
    <location>
        <position position="356"/>
    </location>
</feature>
<feature type="disulfide bond" evidence="1">
    <location>
        <begin position="36"/>
        <end position="80"/>
    </location>
</feature>
<feature type="disulfide bond" evidence="1">
    <location>
        <begin position="41"/>
        <end position="73"/>
    </location>
</feature>
<feature type="disulfide bond" evidence="1">
    <location>
        <begin position="47"/>
        <end position="81"/>
    </location>
</feature>
<feature type="disulfide bond" evidence="3">
    <location>
        <begin position="245"/>
        <end position="317"/>
    </location>
</feature>
<feature type="disulfide bond" evidence="3">
    <location>
        <begin position="276"/>
        <end position="297"/>
    </location>
</feature>
<feature type="disulfide bond" evidence="3">
    <location>
        <begin position="307"/>
        <end position="336"/>
    </location>
</feature>
<name>CLA8_ANOGA</name>
<dbReference type="EMBL" id="AAAB01008848">
    <property type="protein sequence ID" value="EAA07050.2"/>
    <property type="status" value="ALT_SEQ"/>
    <property type="molecule type" value="Genomic_DNA"/>
</dbReference>
<dbReference type="RefSeq" id="XP_311445.2">
    <property type="nucleotide sequence ID" value="XM_311445.2"/>
</dbReference>
<dbReference type="SMR" id="A0A1S4H5S2"/>
<dbReference type="STRING" id="7165.Q7QDZ6"/>
<dbReference type="GlyCosmos" id="A0A1S4H5S2">
    <property type="glycosylation" value="6 sites, No reported glycans"/>
</dbReference>
<dbReference type="PaxDb" id="7165-AGAP010731-PA"/>
<dbReference type="EnsemblMetazoa" id="AGAP010731-RA">
    <property type="protein sequence ID" value="AGAP010731-PA"/>
    <property type="gene ID" value="AGAP010731"/>
</dbReference>
<dbReference type="VEuPathDB" id="VectorBase:AGAMI1_014260"/>
<dbReference type="VEuPathDB" id="VectorBase:AGAP010731"/>
<dbReference type="eggNOG" id="KOG3627">
    <property type="taxonomic scope" value="Eukaryota"/>
</dbReference>
<dbReference type="HOGENOM" id="CLU_006842_0_3_1"/>
<dbReference type="InParanoid" id="A0A1S4H5S2"/>
<dbReference type="Proteomes" id="UP000007062">
    <property type="component" value="Chromosome 3L"/>
</dbReference>
<dbReference type="ExpressionAtlas" id="A0A1S4H5S2">
    <property type="expression patterns" value="differential"/>
</dbReference>
<dbReference type="GO" id="GO:0005615">
    <property type="term" value="C:extracellular space"/>
    <property type="evidence" value="ECO:0000314"/>
    <property type="project" value="UniProtKB"/>
</dbReference>
<dbReference type="GO" id="GO:0004252">
    <property type="term" value="F:serine-type endopeptidase activity"/>
    <property type="evidence" value="ECO:0007669"/>
    <property type="project" value="InterPro"/>
</dbReference>
<dbReference type="GO" id="GO:0042742">
    <property type="term" value="P:defense response to bacterium"/>
    <property type="evidence" value="ECO:0000315"/>
    <property type="project" value="UniProtKB"/>
</dbReference>
<dbReference type="GO" id="GO:0140546">
    <property type="term" value="P:defense response to symbiont"/>
    <property type="evidence" value="ECO:0000315"/>
    <property type="project" value="UniProtKB"/>
</dbReference>
<dbReference type="GO" id="GO:0045087">
    <property type="term" value="P:innate immune response"/>
    <property type="evidence" value="ECO:0000318"/>
    <property type="project" value="GO_Central"/>
</dbReference>
<dbReference type="GO" id="GO:0035008">
    <property type="term" value="P:positive regulation of melanization defense response"/>
    <property type="evidence" value="ECO:0000315"/>
    <property type="project" value="UniProtKB"/>
</dbReference>
<dbReference type="GO" id="GO:0010954">
    <property type="term" value="P:positive regulation of protein processing"/>
    <property type="evidence" value="ECO:0000315"/>
    <property type="project" value="UniProtKB"/>
</dbReference>
<dbReference type="GO" id="GO:0006508">
    <property type="term" value="P:proteolysis"/>
    <property type="evidence" value="ECO:0007669"/>
    <property type="project" value="InterPro"/>
</dbReference>
<dbReference type="CDD" id="cd00190">
    <property type="entry name" value="Tryp_SPc"/>
    <property type="match status" value="1"/>
</dbReference>
<dbReference type="FunFam" id="2.40.10.10:FF:000054">
    <property type="entry name" value="Complement C1r subcomponent"/>
    <property type="match status" value="1"/>
</dbReference>
<dbReference type="FunFam" id="2.40.10.10:FF:000028">
    <property type="entry name" value="Serine protease easter"/>
    <property type="match status" value="1"/>
</dbReference>
<dbReference type="Gene3D" id="2.40.10.10">
    <property type="entry name" value="Trypsin-like serine proteases"/>
    <property type="match status" value="2"/>
</dbReference>
<dbReference type="InterPro" id="IPR009003">
    <property type="entry name" value="Peptidase_S1_PA"/>
</dbReference>
<dbReference type="InterPro" id="IPR043504">
    <property type="entry name" value="Peptidase_S1_PA_chymotrypsin"/>
</dbReference>
<dbReference type="InterPro" id="IPR001314">
    <property type="entry name" value="Peptidase_S1A"/>
</dbReference>
<dbReference type="InterPro" id="IPR041515">
    <property type="entry name" value="PPAF-2-like_Clip"/>
</dbReference>
<dbReference type="InterPro" id="IPR001254">
    <property type="entry name" value="Trypsin_dom"/>
</dbReference>
<dbReference type="PANTHER" id="PTHR24258:SF129">
    <property type="entry name" value="LP15124P-RELATED"/>
    <property type="match status" value="1"/>
</dbReference>
<dbReference type="PANTHER" id="PTHR24258">
    <property type="entry name" value="SERINE PROTEASE-RELATED"/>
    <property type="match status" value="1"/>
</dbReference>
<dbReference type="Pfam" id="PF18322">
    <property type="entry name" value="CLIP_1"/>
    <property type="match status" value="1"/>
</dbReference>
<dbReference type="Pfam" id="PF00089">
    <property type="entry name" value="Trypsin"/>
    <property type="match status" value="1"/>
</dbReference>
<dbReference type="PRINTS" id="PR00722">
    <property type="entry name" value="CHYMOTRYPSIN"/>
</dbReference>
<dbReference type="SMART" id="SM00020">
    <property type="entry name" value="Tryp_SPc"/>
    <property type="match status" value="1"/>
</dbReference>
<dbReference type="SUPFAM" id="SSF50494">
    <property type="entry name" value="Trypsin-like serine proteases"/>
    <property type="match status" value="1"/>
</dbReference>
<dbReference type="PROSITE" id="PS50240">
    <property type="entry name" value="TRYPSIN_DOM"/>
    <property type="match status" value="1"/>
</dbReference>
<sequence>MPSWWCCCCLVVLLYAQRMIVPSSAQNDGSDELQECPGGFCSPKYLCPNGTYNEANAQNQEIIMLRFGEEDVCQDYMQVCCSNATSMRYELVTNNEPVEYGCGISNPGGLIYQVEGNRTYAQYGEFPWVVAILEAFYSSNEQQFTYVGGGTLIHPRFVVTAAHIFNKTENLVASFGEWDMNRDENVYPKQNIDIDRTIIVHPEYNSVGLLNDIALAQLKQNVVYDKHIRPICLPNPTDRFDDQLCISTGWGIEALTSAYANVLKRVDLPVIARASCKKLFAETRLGPFFRLHKSVLCAGGEEGADMCDGDGGSGLACPNESGAYVLAGIVSWGLSCHQQNVPGAYVNVARFVTWINATIEGIL</sequence>
<organism evidence="11">
    <name type="scientific">Anopheles gambiae</name>
    <name type="common">African malaria mosquito</name>
    <dbReference type="NCBI Taxonomy" id="7165"/>
    <lineage>
        <taxon>Eukaryota</taxon>
        <taxon>Metazoa</taxon>
        <taxon>Ecdysozoa</taxon>
        <taxon>Arthropoda</taxon>
        <taxon>Hexapoda</taxon>
        <taxon>Insecta</taxon>
        <taxon>Pterygota</taxon>
        <taxon>Neoptera</taxon>
        <taxon>Endopterygota</taxon>
        <taxon>Diptera</taxon>
        <taxon>Nematocera</taxon>
        <taxon>Culicoidea</taxon>
        <taxon>Culicidae</taxon>
        <taxon>Anophelinae</taxon>
        <taxon>Anopheles</taxon>
    </lineage>
</organism>
<reference evidence="11" key="1">
    <citation type="journal article" date="2002" name="Science">
        <title>The genome sequence of the malaria mosquito Anopheles gambiae.</title>
        <authorList>
            <person name="Holt R.A."/>
            <person name="Subramanian G.M."/>
            <person name="Halpern A."/>
            <person name="Sutton G.G."/>
            <person name="Charlab R."/>
            <person name="Nusskern D.R."/>
            <person name="Wincker P."/>
            <person name="Clark A.G."/>
            <person name="Ribeiro J.M.C."/>
            <person name="Wides R."/>
            <person name="Salzberg S.L."/>
            <person name="Loftus B.J."/>
            <person name="Yandell M.D."/>
            <person name="Majoros W.H."/>
            <person name="Rusch D.B."/>
            <person name="Lai Z."/>
            <person name="Kraft C.L."/>
            <person name="Abril J.F."/>
            <person name="Anthouard V."/>
            <person name="Arensburger P."/>
            <person name="Atkinson P.W."/>
            <person name="Baden H."/>
            <person name="de Berardinis V."/>
            <person name="Baldwin D."/>
            <person name="Benes V."/>
            <person name="Biedler J."/>
            <person name="Blass C."/>
            <person name="Bolanos R."/>
            <person name="Boscus D."/>
            <person name="Barnstead M."/>
            <person name="Cai S."/>
            <person name="Center A."/>
            <person name="Chaturverdi K."/>
            <person name="Christophides G.K."/>
            <person name="Chrystal M.A.M."/>
            <person name="Clamp M."/>
            <person name="Cravchik A."/>
            <person name="Curwen V."/>
            <person name="Dana A."/>
            <person name="Delcher A."/>
            <person name="Dew I."/>
            <person name="Evans C.A."/>
            <person name="Flanigan M."/>
            <person name="Grundschober-Freimoser A."/>
            <person name="Friedli L."/>
            <person name="Gu Z."/>
            <person name="Guan P."/>
            <person name="Guigo R."/>
            <person name="Hillenmeyer M.E."/>
            <person name="Hladun S.L."/>
            <person name="Hogan J.R."/>
            <person name="Hong Y.S."/>
            <person name="Hoover J."/>
            <person name="Jaillon O."/>
            <person name="Ke Z."/>
            <person name="Kodira C.D."/>
            <person name="Kokoza E."/>
            <person name="Koutsos A."/>
            <person name="Letunic I."/>
            <person name="Levitsky A.A."/>
            <person name="Liang Y."/>
            <person name="Lin J.-J."/>
            <person name="Lobo N.F."/>
            <person name="Lopez J.R."/>
            <person name="Malek J.A."/>
            <person name="McIntosh T.C."/>
            <person name="Meister S."/>
            <person name="Miller J.R."/>
            <person name="Mobarry C."/>
            <person name="Mongin E."/>
            <person name="Murphy S.D."/>
            <person name="O'Brochta D.A."/>
            <person name="Pfannkoch C."/>
            <person name="Qi R."/>
            <person name="Regier M.A."/>
            <person name="Remington K."/>
            <person name="Shao H."/>
            <person name="Sharakhova M.V."/>
            <person name="Sitter C.D."/>
            <person name="Shetty J."/>
            <person name="Smith T.J."/>
            <person name="Strong R."/>
            <person name="Sun J."/>
            <person name="Thomasova D."/>
            <person name="Ton L.Q."/>
            <person name="Topalis P."/>
            <person name="Tu Z.J."/>
            <person name="Unger M.F."/>
            <person name="Walenz B."/>
            <person name="Wang A.H."/>
            <person name="Wang J."/>
            <person name="Wang M."/>
            <person name="Wang X."/>
            <person name="Woodford K.J."/>
            <person name="Wortman J.R."/>
            <person name="Wu M."/>
            <person name="Yao A."/>
            <person name="Zdobnov E.M."/>
            <person name="Zhang H."/>
            <person name="Zhao Q."/>
            <person name="Zhao S."/>
            <person name="Zhu S.C."/>
            <person name="Zhimulev I."/>
            <person name="Coluzzi M."/>
            <person name="della Torre A."/>
            <person name="Roth C.W."/>
            <person name="Louis C."/>
            <person name="Kalush F."/>
            <person name="Mural R.J."/>
            <person name="Myers E.W."/>
            <person name="Adams M.D."/>
            <person name="Smith H.O."/>
            <person name="Broder S."/>
            <person name="Gardner M.J."/>
            <person name="Fraser C.M."/>
            <person name="Birney E."/>
            <person name="Bork P."/>
            <person name="Brey P.T."/>
            <person name="Venter J.C."/>
            <person name="Weissenbach J."/>
            <person name="Kafatos F.C."/>
            <person name="Collins F.H."/>
            <person name="Hoffman S.L."/>
        </authorList>
    </citation>
    <scope>NUCLEOTIDE SEQUENCE [LARGE SCALE GENOMIC DNA]</scope>
    <source>
        <strain evidence="11">PEST</strain>
    </source>
</reference>
<reference evidence="10" key="2">
    <citation type="journal article" date="2006" name="Cell. Microbiol.">
        <title>A genetic module regulates the melanization response of Anopheles to Plasmodium.</title>
        <authorList>
            <person name="Volz J."/>
            <person name="Mueller H.M."/>
            <person name="Zdanowicz A."/>
            <person name="Kafatos F.C."/>
            <person name="Osta M.A."/>
        </authorList>
    </citation>
    <scope>FUNCTION</scope>
    <scope>INDUCTION</scope>
    <scope>DISRUPTION PHENOTYPE</scope>
    <source>
        <strain evidence="5">G3</strain>
        <strain evidence="5">L3-5</strain>
    </source>
</reference>
<reference evidence="10" key="3">
    <citation type="journal article" date="2007" name="J. Biol. Chem.">
        <title>The melanization reaction is not required for survival of Anopheles gambiae mosquitoes after bacterial infections.</title>
        <authorList>
            <person name="Schnitger A.K."/>
            <person name="Kafatos F.C."/>
            <person name="Osta M.A."/>
        </authorList>
    </citation>
    <scope>FUNCTION</scope>
    <scope>SUBUNIT</scope>
    <scope>SUBCELLULAR LOCATION</scope>
    <scope>INDUCTION</scope>
    <scope>PROTEOLYTIC CLEAVAGE</scope>
    <scope>DISRUPTION PHENOTYPE</scope>
    <source>
        <strain evidence="6">G3</strain>
    </source>
</reference>
<reference evidence="10" key="4">
    <citation type="journal article" date="2012" name="PLoS Pathog.">
        <title>The mosquito melanization response is implicated in defense against the entomopathogenic fungus Beauveria bassiana.</title>
        <authorList>
            <person name="Yassine H."/>
            <person name="Kamareddine L."/>
            <person name="Osta M.A."/>
        </authorList>
    </citation>
    <scope>FUNCTION</scope>
    <scope>DISRUPTION PHENOTYPE</scope>
    <source>
        <strain evidence="7">G3</strain>
    </source>
</reference>
<reference evidence="10" key="5">
    <citation type="journal article" date="2020" name="PLoS Pathog.">
        <title>The CLIP-domain serine protease CLIPC9 regulates melanization downstream of SPCLIP1, CLIPA8, and CLIPA28 in the malaria vector Anopheles gambiae.</title>
        <authorList>
            <person name="Sousa G.L."/>
            <person name="Bishnoi R."/>
            <person name="Baxter R.H.G."/>
            <person name="Povelones M."/>
        </authorList>
    </citation>
    <scope>FUNCTION</scope>
    <scope>SUBCELLULAR LOCATION</scope>
    <scope>DISRUPTION PHENOTYPE</scope>
    <source>
        <strain evidence="8">G3</strain>
    </source>
</reference>